<dbReference type="EC" id="2.3.1.46" evidence="1"/>
<dbReference type="EMBL" id="CU468230">
    <property type="protein sequence ID" value="CAP02319.1"/>
    <property type="molecule type" value="Genomic_DNA"/>
</dbReference>
<dbReference type="SMR" id="B0VL51"/>
<dbReference type="ESTHER" id="acib3-metx">
    <property type="family name" value="Homoserine_transacetylase"/>
</dbReference>
<dbReference type="KEGG" id="abm:ABSDF3033"/>
<dbReference type="HOGENOM" id="CLU_028760_1_2_6"/>
<dbReference type="UniPathway" id="UPA00051">
    <property type="reaction ID" value="UER00075"/>
</dbReference>
<dbReference type="Proteomes" id="UP000001741">
    <property type="component" value="Chromosome"/>
</dbReference>
<dbReference type="GO" id="GO:0005737">
    <property type="term" value="C:cytoplasm"/>
    <property type="evidence" value="ECO:0007669"/>
    <property type="project" value="UniProtKB-SubCell"/>
</dbReference>
<dbReference type="GO" id="GO:0004414">
    <property type="term" value="F:homoserine O-acetyltransferase activity"/>
    <property type="evidence" value="ECO:0007669"/>
    <property type="project" value="TreeGrafter"/>
</dbReference>
<dbReference type="GO" id="GO:0008899">
    <property type="term" value="F:homoserine O-succinyltransferase activity"/>
    <property type="evidence" value="ECO:0007669"/>
    <property type="project" value="UniProtKB-UniRule"/>
</dbReference>
<dbReference type="GO" id="GO:0009092">
    <property type="term" value="P:homoserine metabolic process"/>
    <property type="evidence" value="ECO:0007669"/>
    <property type="project" value="TreeGrafter"/>
</dbReference>
<dbReference type="GO" id="GO:0009086">
    <property type="term" value="P:methionine biosynthetic process"/>
    <property type="evidence" value="ECO:0007669"/>
    <property type="project" value="UniProtKB-UniRule"/>
</dbReference>
<dbReference type="FunFam" id="1.10.1740.110:FF:000001">
    <property type="entry name" value="Homoserine O-acetyltransferase"/>
    <property type="match status" value="1"/>
</dbReference>
<dbReference type="Gene3D" id="1.10.1740.110">
    <property type="match status" value="1"/>
</dbReference>
<dbReference type="Gene3D" id="3.40.50.1820">
    <property type="entry name" value="alpha/beta hydrolase"/>
    <property type="match status" value="1"/>
</dbReference>
<dbReference type="HAMAP" id="MF_00296">
    <property type="entry name" value="MetX_acyltransf"/>
    <property type="match status" value="1"/>
</dbReference>
<dbReference type="InterPro" id="IPR000073">
    <property type="entry name" value="AB_hydrolase_1"/>
</dbReference>
<dbReference type="InterPro" id="IPR029058">
    <property type="entry name" value="AB_hydrolase_fold"/>
</dbReference>
<dbReference type="InterPro" id="IPR008220">
    <property type="entry name" value="HAT_MetX-like"/>
</dbReference>
<dbReference type="NCBIfam" id="TIGR01392">
    <property type="entry name" value="homoserO_Ac_trn"/>
    <property type="match status" value="1"/>
</dbReference>
<dbReference type="NCBIfam" id="NF001209">
    <property type="entry name" value="PRK00175.1"/>
    <property type="match status" value="1"/>
</dbReference>
<dbReference type="PANTHER" id="PTHR32268">
    <property type="entry name" value="HOMOSERINE O-ACETYLTRANSFERASE"/>
    <property type="match status" value="1"/>
</dbReference>
<dbReference type="PANTHER" id="PTHR32268:SF11">
    <property type="entry name" value="HOMOSERINE O-ACETYLTRANSFERASE"/>
    <property type="match status" value="1"/>
</dbReference>
<dbReference type="Pfam" id="PF00561">
    <property type="entry name" value="Abhydrolase_1"/>
    <property type="match status" value="1"/>
</dbReference>
<dbReference type="PIRSF" id="PIRSF000443">
    <property type="entry name" value="Homoser_Ac_trans"/>
    <property type="match status" value="1"/>
</dbReference>
<dbReference type="SUPFAM" id="SSF53474">
    <property type="entry name" value="alpha/beta-Hydrolases"/>
    <property type="match status" value="1"/>
</dbReference>
<keyword id="KW-0012">Acyltransferase</keyword>
<keyword id="KW-0028">Amino-acid biosynthesis</keyword>
<keyword id="KW-0963">Cytoplasm</keyword>
<keyword id="KW-0486">Methionine biosynthesis</keyword>
<keyword id="KW-0808">Transferase</keyword>
<accession>B0VL51</accession>
<reference key="1">
    <citation type="journal article" date="2008" name="PLoS ONE">
        <title>Comparative analysis of Acinetobacters: three genomes for three lifestyles.</title>
        <authorList>
            <person name="Vallenet D."/>
            <person name="Nordmann P."/>
            <person name="Barbe V."/>
            <person name="Poirel L."/>
            <person name="Mangenot S."/>
            <person name="Bataille E."/>
            <person name="Dossat C."/>
            <person name="Gas S."/>
            <person name="Kreimeyer A."/>
            <person name="Lenoble P."/>
            <person name="Oztas S."/>
            <person name="Poulain J."/>
            <person name="Segurens B."/>
            <person name="Robert C."/>
            <person name="Abergel C."/>
            <person name="Claverie J.-M."/>
            <person name="Raoult D."/>
            <person name="Medigue C."/>
            <person name="Weissenbach J."/>
            <person name="Cruveiller S."/>
        </authorList>
    </citation>
    <scope>NUCLEOTIDE SEQUENCE [LARGE SCALE GENOMIC DNA]</scope>
    <source>
        <strain>SDF</strain>
    </source>
</reference>
<name>METXS_ACIBS</name>
<sequence>MSFPADSVGLVTPQKFQFEEPLHLECGRVLPRFELMVETYGTLNADKSNAILICHALSGHHHAAGYHHEDDKKAGWWDSCIGPGKAIDTNKFFVVALNNIGGCSGSTGPTSPNPENDNRPYGPDFPLVTVRDWVKTQAMLSDRLGISVWYAVVGGSLGGMQALQWSVDYPDRLQKCVVIASAPKLSAQNIAFNEVARQSILSDPDFHHGRYLENDSYPKRGLILARMVGHITYLSEEAMKQKFGRDLKSGKFMYGFDVEFQVESYLRYQGEQFSRNFDADTYLIMTKALDYFDPSREYGHSLTEAMSKTKCQFLIVSFTTDWRFAPSRSQEIVDALITNHKPVSYLDIDAEQGHDSFLFPIPLYVKTLRAFLGGEEHLKSTSLEAS</sequence>
<proteinExistence type="inferred from homology"/>
<evidence type="ECO:0000255" key="1">
    <source>
        <dbReference type="HAMAP-Rule" id="MF_00296"/>
    </source>
</evidence>
<comment type="function">
    <text evidence="1">Transfers a succinyl group from succinyl-CoA to L-homoserine, forming succinyl-L-homoserine.</text>
</comment>
<comment type="catalytic activity">
    <reaction evidence="1">
        <text>L-homoserine + succinyl-CoA = O-succinyl-L-homoserine + CoA</text>
        <dbReference type="Rhea" id="RHEA:22008"/>
        <dbReference type="ChEBI" id="CHEBI:57287"/>
        <dbReference type="ChEBI" id="CHEBI:57292"/>
        <dbReference type="ChEBI" id="CHEBI:57476"/>
        <dbReference type="ChEBI" id="CHEBI:57661"/>
        <dbReference type="EC" id="2.3.1.46"/>
    </reaction>
</comment>
<comment type="pathway">
    <text evidence="1">Amino-acid biosynthesis; L-methionine biosynthesis via de novo pathway; O-succinyl-L-homoserine from L-homoserine: step 1/1.</text>
</comment>
<comment type="subunit">
    <text evidence="1">Homodimer.</text>
</comment>
<comment type="subcellular location">
    <subcellularLocation>
        <location evidence="1">Cytoplasm</location>
    </subcellularLocation>
</comment>
<comment type="similarity">
    <text evidence="1">Belongs to the AB hydrolase superfamily. MetX family.</text>
</comment>
<protein>
    <recommendedName>
        <fullName evidence="1">Homoserine O-succinyltransferase</fullName>
        <shortName evidence="1">HST</shortName>
        <ecNumber evidence="1">2.3.1.46</ecNumber>
    </recommendedName>
    <alternativeName>
        <fullName evidence="1">Homoserine transsuccinylase</fullName>
        <shortName evidence="1">HTS</shortName>
    </alternativeName>
</protein>
<gene>
    <name evidence="1" type="primary">metXS</name>
    <name type="ordered locus">ABSDF3033</name>
</gene>
<organism>
    <name type="scientific">Acinetobacter baumannii (strain SDF)</name>
    <dbReference type="NCBI Taxonomy" id="509170"/>
    <lineage>
        <taxon>Bacteria</taxon>
        <taxon>Pseudomonadati</taxon>
        <taxon>Pseudomonadota</taxon>
        <taxon>Gammaproteobacteria</taxon>
        <taxon>Moraxellales</taxon>
        <taxon>Moraxellaceae</taxon>
        <taxon>Acinetobacter</taxon>
        <taxon>Acinetobacter calcoaceticus/baumannii complex</taxon>
    </lineage>
</organism>
<feature type="chain" id="PRO_1000115206" description="Homoserine O-succinyltransferase">
    <location>
        <begin position="1"/>
        <end position="386"/>
    </location>
</feature>
<feature type="domain" description="AB hydrolase-1" evidence="1">
    <location>
        <begin position="49"/>
        <end position="358"/>
    </location>
</feature>
<feature type="active site" description="Nucleophile" evidence="1">
    <location>
        <position position="156"/>
    </location>
</feature>
<feature type="active site" evidence="1">
    <location>
        <position position="321"/>
    </location>
</feature>
<feature type="active site" evidence="1">
    <location>
        <position position="354"/>
    </location>
</feature>
<feature type="binding site" evidence="1">
    <location>
        <position position="226"/>
    </location>
    <ligand>
        <name>substrate</name>
    </ligand>
</feature>
<feature type="binding site" evidence="1">
    <location>
        <position position="355"/>
    </location>
    <ligand>
        <name>substrate</name>
    </ligand>
</feature>
<feature type="site" description="Important for acyl-CoA specificity" evidence="1">
    <location>
        <position position="323"/>
    </location>
</feature>